<keyword id="KW-0963">Cytoplasm</keyword>
<keyword id="KW-0489">Methyltransferase</keyword>
<keyword id="KW-0698">rRNA processing</keyword>
<keyword id="KW-0949">S-adenosyl-L-methionine</keyword>
<keyword id="KW-0808">Transferase</keyword>
<comment type="function">
    <text evidence="1">Specifically methylates the pseudouridine at position 1915 (m3Psi1915) in 23S rRNA.</text>
</comment>
<comment type="catalytic activity">
    <reaction evidence="1">
        <text>pseudouridine(1915) in 23S rRNA + S-adenosyl-L-methionine = N(3)-methylpseudouridine(1915) in 23S rRNA + S-adenosyl-L-homocysteine + H(+)</text>
        <dbReference type="Rhea" id="RHEA:42752"/>
        <dbReference type="Rhea" id="RHEA-COMP:10221"/>
        <dbReference type="Rhea" id="RHEA-COMP:10222"/>
        <dbReference type="ChEBI" id="CHEBI:15378"/>
        <dbReference type="ChEBI" id="CHEBI:57856"/>
        <dbReference type="ChEBI" id="CHEBI:59789"/>
        <dbReference type="ChEBI" id="CHEBI:65314"/>
        <dbReference type="ChEBI" id="CHEBI:74486"/>
        <dbReference type="EC" id="2.1.1.177"/>
    </reaction>
</comment>
<comment type="subunit">
    <text evidence="1">Homodimer.</text>
</comment>
<comment type="subcellular location">
    <subcellularLocation>
        <location evidence="1">Cytoplasm</location>
    </subcellularLocation>
</comment>
<comment type="similarity">
    <text evidence="1">Belongs to the RNA methyltransferase RlmH family.</text>
</comment>
<feature type="chain" id="PRO_0000198171" description="Ribosomal RNA large subunit methyltransferase H">
    <location>
        <begin position="1"/>
        <end position="155"/>
    </location>
</feature>
<feature type="binding site" evidence="1">
    <location>
        <position position="72"/>
    </location>
    <ligand>
        <name>S-adenosyl-L-methionine</name>
        <dbReference type="ChEBI" id="CHEBI:59789"/>
    </ligand>
</feature>
<feature type="binding site" evidence="1">
    <location>
        <position position="103"/>
    </location>
    <ligand>
        <name>S-adenosyl-L-methionine</name>
        <dbReference type="ChEBI" id="CHEBI:59789"/>
    </ligand>
</feature>
<feature type="binding site" evidence="1">
    <location>
        <begin position="122"/>
        <end position="127"/>
    </location>
    <ligand>
        <name>S-adenosyl-L-methionine</name>
        <dbReference type="ChEBI" id="CHEBI:59789"/>
    </ligand>
</feature>
<sequence length="155" mass="17399">MKLQLVAVGTKMPDWVQTGFTEYLRRFPKDMPFELIEIPAGKRGKNADIKRILDKEGEQMLAAAGKNRIVTLDIPGKPWDTPQLANELERWKQDGRDVSLLIGGPEGLSPACKAAAEQSWSLSALTLPHPLVRVLVAESLYRAWSITTNHPYHRE</sequence>
<dbReference type="EC" id="2.1.1.177" evidence="1"/>
<dbReference type="EMBL" id="CP000026">
    <property type="protein sequence ID" value="AAV77987.1"/>
    <property type="molecule type" value="Genomic_DNA"/>
</dbReference>
<dbReference type="RefSeq" id="WP_000776107.1">
    <property type="nucleotide sequence ID" value="NC_006511.1"/>
</dbReference>
<dbReference type="SMR" id="Q5PM81"/>
<dbReference type="GeneID" id="66755108"/>
<dbReference type="KEGG" id="spt:SPA2093"/>
<dbReference type="HOGENOM" id="CLU_100552_1_0_6"/>
<dbReference type="Proteomes" id="UP000008185">
    <property type="component" value="Chromosome"/>
</dbReference>
<dbReference type="GO" id="GO:0005737">
    <property type="term" value="C:cytoplasm"/>
    <property type="evidence" value="ECO:0007669"/>
    <property type="project" value="UniProtKB-SubCell"/>
</dbReference>
<dbReference type="GO" id="GO:0070038">
    <property type="term" value="F:rRNA (pseudouridine-N3-)-methyltransferase activity"/>
    <property type="evidence" value="ECO:0007669"/>
    <property type="project" value="UniProtKB-UniRule"/>
</dbReference>
<dbReference type="CDD" id="cd18081">
    <property type="entry name" value="RlmH-like"/>
    <property type="match status" value="1"/>
</dbReference>
<dbReference type="FunFam" id="3.40.1280.10:FF:000004">
    <property type="entry name" value="Ribosomal RNA large subunit methyltransferase H"/>
    <property type="match status" value="1"/>
</dbReference>
<dbReference type="Gene3D" id="3.40.1280.10">
    <property type="match status" value="1"/>
</dbReference>
<dbReference type="HAMAP" id="MF_00658">
    <property type="entry name" value="23SrRNA_methyltr_H"/>
    <property type="match status" value="1"/>
</dbReference>
<dbReference type="InterPro" id="IPR029028">
    <property type="entry name" value="Alpha/beta_knot_MTases"/>
</dbReference>
<dbReference type="InterPro" id="IPR003742">
    <property type="entry name" value="RlmH-like"/>
</dbReference>
<dbReference type="InterPro" id="IPR029026">
    <property type="entry name" value="tRNA_m1G_MTases_N"/>
</dbReference>
<dbReference type="NCBIfam" id="NF000984">
    <property type="entry name" value="PRK00103.1-1"/>
    <property type="match status" value="1"/>
</dbReference>
<dbReference type="NCBIfam" id="NF000986">
    <property type="entry name" value="PRK00103.1-4"/>
    <property type="match status" value="1"/>
</dbReference>
<dbReference type="NCBIfam" id="TIGR00246">
    <property type="entry name" value="tRNA_RlmH_YbeA"/>
    <property type="match status" value="1"/>
</dbReference>
<dbReference type="PANTHER" id="PTHR33603">
    <property type="entry name" value="METHYLTRANSFERASE"/>
    <property type="match status" value="1"/>
</dbReference>
<dbReference type="PANTHER" id="PTHR33603:SF1">
    <property type="entry name" value="RIBOSOMAL RNA LARGE SUBUNIT METHYLTRANSFERASE H"/>
    <property type="match status" value="1"/>
</dbReference>
<dbReference type="Pfam" id="PF02590">
    <property type="entry name" value="SPOUT_MTase"/>
    <property type="match status" value="1"/>
</dbReference>
<dbReference type="PIRSF" id="PIRSF004505">
    <property type="entry name" value="MT_bac"/>
    <property type="match status" value="1"/>
</dbReference>
<dbReference type="SUPFAM" id="SSF75217">
    <property type="entry name" value="alpha/beta knot"/>
    <property type="match status" value="1"/>
</dbReference>
<organism>
    <name type="scientific">Salmonella paratyphi A (strain ATCC 9150 / SARB42)</name>
    <dbReference type="NCBI Taxonomy" id="295319"/>
    <lineage>
        <taxon>Bacteria</taxon>
        <taxon>Pseudomonadati</taxon>
        <taxon>Pseudomonadota</taxon>
        <taxon>Gammaproteobacteria</taxon>
        <taxon>Enterobacterales</taxon>
        <taxon>Enterobacteriaceae</taxon>
        <taxon>Salmonella</taxon>
    </lineage>
</organism>
<gene>
    <name evidence="1" type="primary">rlmH</name>
    <name type="ordered locus">SPA2093</name>
</gene>
<reference key="1">
    <citation type="journal article" date="2004" name="Nat. Genet.">
        <title>Comparison of genome degradation in Paratyphi A and Typhi, human-restricted serovars of Salmonella enterica that cause typhoid.</title>
        <authorList>
            <person name="McClelland M."/>
            <person name="Sanderson K.E."/>
            <person name="Clifton S.W."/>
            <person name="Latreille P."/>
            <person name="Porwollik S."/>
            <person name="Sabo A."/>
            <person name="Meyer R."/>
            <person name="Bieri T."/>
            <person name="Ozersky P."/>
            <person name="McLellan M."/>
            <person name="Harkins C.R."/>
            <person name="Wang C."/>
            <person name="Nguyen C."/>
            <person name="Berghoff A."/>
            <person name="Elliott G."/>
            <person name="Kohlberg S."/>
            <person name="Strong C."/>
            <person name="Du F."/>
            <person name="Carter J."/>
            <person name="Kremizki C."/>
            <person name="Layman D."/>
            <person name="Leonard S."/>
            <person name="Sun H."/>
            <person name="Fulton L."/>
            <person name="Nash W."/>
            <person name="Miner T."/>
            <person name="Minx P."/>
            <person name="Delehaunty K."/>
            <person name="Fronick C."/>
            <person name="Magrini V."/>
            <person name="Nhan M."/>
            <person name="Warren W."/>
            <person name="Florea L."/>
            <person name="Spieth J."/>
            <person name="Wilson R.K."/>
        </authorList>
    </citation>
    <scope>NUCLEOTIDE SEQUENCE [LARGE SCALE GENOMIC DNA]</scope>
    <source>
        <strain>ATCC 9150 / SARB42</strain>
    </source>
</reference>
<name>RLMH_SALPA</name>
<proteinExistence type="inferred from homology"/>
<evidence type="ECO:0000255" key="1">
    <source>
        <dbReference type="HAMAP-Rule" id="MF_00658"/>
    </source>
</evidence>
<accession>Q5PM81</accession>
<protein>
    <recommendedName>
        <fullName evidence="1">Ribosomal RNA large subunit methyltransferase H</fullName>
        <ecNumber evidence="1">2.1.1.177</ecNumber>
    </recommendedName>
    <alternativeName>
        <fullName evidence="1">23S rRNA (pseudouridine1915-N3)-methyltransferase</fullName>
    </alternativeName>
    <alternativeName>
        <fullName evidence="1">23S rRNA m3Psi1915 methyltransferase</fullName>
    </alternativeName>
    <alternativeName>
        <fullName evidence="1">rRNA (pseudouridine-N3-)-methyltransferase RlmH</fullName>
    </alternativeName>
</protein>